<accession>Q6NRG5</accession>
<protein>
    <recommendedName>
        <fullName evidence="1">NADPH-dependent diflavin oxidoreductase 1</fullName>
        <ecNumber evidence="1">1.18.1.-</ecNumber>
    </recommendedName>
    <alternativeName>
        <fullName evidence="1">NADPH-dependent FMN and FAD-containing oxidoreductase</fullName>
    </alternativeName>
</protein>
<feature type="chain" id="PRO_0000319542" description="NADPH-dependent diflavin oxidoreductase 1">
    <location>
        <begin position="1"/>
        <end position="600"/>
    </location>
</feature>
<feature type="domain" description="Flavodoxin-like" evidence="1">
    <location>
        <begin position="6"/>
        <end position="150"/>
    </location>
</feature>
<feature type="domain" description="FAD-binding FR-type" evidence="1">
    <location>
        <begin position="210"/>
        <end position="449"/>
    </location>
</feature>
<feature type="binding site" evidence="1">
    <location>
        <begin position="12"/>
        <end position="17"/>
    </location>
    <ligand>
        <name>FMN</name>
        <dbReference type="ChEBI" id="CHEBI:58210"/>
    </ligand>
</feature>
<feature type="binding site" evidence="1">
    <location>
        <begin position="59"/>
        <end position="62"/>
    </location>
    <ligand>
        <name>FMN</name>
        <dbReference type="ChEBI" id="CHEBI:58210"/>
    </ligand>
</feature>
<feature type="binding site" evidence="1">
    <location>
        <begin position="97"/>
        <end position="106"/>
    </location>
    <ligand>
        <name>FMN</name>
        <dbReference type="ChEBI" id="CHEBI:58210"/>
    </ligand>
</feature>
<feature type="binding site" evidence="1">
    <location>
        <position position="132"/>
    </location>
    <ligand>
        <name>FMN</name>
        <dbReference type="ChEBI" id="CHEBI:58210"/>
    </ligand>
</feature>
<feature type="binding site" evidence="1">
    <location>
        <position position="354"/>
    </location>
    <ligand>
        <name>FAD</name>
        <dbReference type="ChEBI" id="CHEBI:57692"/>
    </ligand>
</feature>
<feature type="binding site" evidence="1">
    <location>
        <begin position="386"/>
        <end position="389"/>
    </location>
    <ligand>
        <name>FAD</name>
        <dbReference type="ChEBI" id="CHEBI:57692"/>
    </ligand>
</feature>
<feature type="binding site" evidence="1">
    <location>
        <begin position="420"/>
        <end position="423"/>
    </location>
    <ligand>
        <name>FAD</name>
        <dbReference type="ChEBI" id="CHEBI:57692"/>
    </ligand>
</feature>
<feature type="binding site" evidence="1">
    <location>
        <position position="463"/>
    </location>
    <ligand>
        <name>NADP(+)</name>
        <dbReference type="ChEBI" id="CHEBI:58349"/>
    </ligand>
</feature>
<feature type="binding site" evidence="1">
    <location>
        <begin position="518"/>
        <end position="519"/>
    </location>
    <ligand>
        <name>NADP(+)</name>
        <dbReference type="ChEBI" id="CHEBI:58349"/>
    </ligand>
</feature>
<feature type="binding site" evidence="1">
    <location>
        <begin position="524"/>
        <end position="528"/>
    </location>
    <ligand>
        <name>NADP(+)</name>
        <dbReference type="ChEBI" id="CHEBI:58349"/>
    </ligand>
</feature>
<feature type="binding site" evidence="1">
    <location>
        <position position="599"/>
    </location>
    <ligand>
        <name>FAD</name>
        <dbReference type="ChEBI" id="CHEBI:57692"/>
    </ligand>
</feature>
<evidence type="ECO:0000255" key="1">
    <source>
        <dbReference type="HAMAP-Rule" id="MF_03178"/>
    </source>
</evidence>
<gene>
    <name evidence="1" type="primary">ndor1</name>
</gene>
<keyword id="KW-0963">Cytoplasm</keyword>
<keyword id="KW-0274">FAD</keyword>
<keyword id="KW-0285">Flavoprotein</keyword>
<keyword id="KW-0288">FMN</keyword>
<keyword id="KW-0521">NADP</keyword>
<keyword id="KW-0560">Oxidoreductase</keyword>
<keyword id="KW-1185">Reference proteome</keyword>
<proteinExistence type="evidence at transcript level"/>
<sequence length="600" mass="68077">MPQQNLLILYGSQTGTAEDLAGRLSREAKRHHFNCRTEALDEYRVANLINEHLVIFVCATTGQGDPPDNMKNFWRFIFRRNLPHNALCQMDYAVLGLGDSSYPKFNFIAKKLHKRLNQLGACPLLPAALGDDQHELGPDAVVDPWLKDLWSKVLSMFPLRPGLEIISEDVLLPPKYSLRLLEEKVGQSELSGDAYERDFISNNTTPPSEIHPFLAPVLSNERVSAHDHFQDVRLIEFNITGSAIQFYPGDVVMVQPRNSLLHVEQFCSLLHLDPLNKVVVEPSDPESPVPMHLAALCSVQQLVERYLDICSIPRRSFFQLFCHFSPDEMEREKLKEFSCAAGQEELYSYCNRPRRTILEVLVDFPHTTRCIPATFLLELIPQIRPRAFSIASSMEALPNTIQILMAVVQYKTKLIEPRRGLCSTWLASLPPHGTERVPIWVKKGSMKFPCDPDTPVVMVGPGTGVAPFRAAIQERVANGRPGNCLFFGCRGKSKDFYFEKEWEDLGNRGYLTLFTAFSRDQEDKIYVQHRIKENSKLLWDLIGTKQGYVYIAGNAKLMPNEVTDALKWVLQLEGGMSAPDAEQYLASMEKSCRFQSETWS</sequence>
<name>NDOR1_XENLA</name>
<dbReference type="EC" id="1.18.1.-" evidence="1"/>
<dbReference type="EMBL" id="BC070785">
    <property type="protein sequence ID" value="AAH70785.1"/>
    <property type="molecule type" value="mRNA"/>
</dbReference>
<dbReference type="RefSeq" id="NP_001084766.1">
    <property type="nucleotide sequence ID" value="NM_001091297.1"/>
</dbReference>
<dbReference type="SMR" id="Q6NRG5"/>
<dbReference type="DNASU" id="431801"/>
<dbReference type="AGR" id="Xenbase:XB-GENE-6251781"/>
<dbReference type="Xenbase" id="XB-GENE-6251781">
    <property type="gene designation" value="ndor1.L"/>
</dbReference>
<dbReference type="Proteomes" id="UP000186698">
    <property type="component" value="Unplaced"/>
</dbReference>
<dbReference type="Bgee" id="431801">
    <property type="expression patterns" value="Expressed in oocyte and 19 other cell types or tissues"/>
</dbReference>
<dbReference type="GO" id="GO:0005829">
    <property type="term" value="C:cytosol"/>
    <property type="evidence" value="ECO:0000250"/>
    <property type="project" value="UniProtKB"/>
</dbReference>
<dbReference type="GO" id="GO:0048471">
    <property type="term" value="C:perinuclear region of cytoplasm"/>
    <property type="evidence" value="ECO:0007669"/>
    <property type="project" value="UniProtKB-SubCell"/>
</dbReference>
<dbReference type="GO" id="GO:0009055">
    <property type="term" value="F:electron transfer activity"/>
    <property type="evidence" value="ECO:0000250"/>
    <property type="project" value="UniProtKB"/>
</dbReference>
<dbReference type="GO" id="GO:0050660">
    <property type="term" value="F:flavin adenine dinucleotide binding"/>
    <property type="evidence" value="ECO:0000318"/>
    <property type="project" value="GO_Central"/>
</dbReference>
<dbReference type="GO" id="GO:0010181">
    <property type="term" value="F:FMN binding"/>
    <property type="evidence" value="ECO:0000318"/>
    <property type="project" value="GO_Central"/>
</dbReference>
<dbReference type="GO" id="GO:0050661">
    <property type="term" value="F:NADP binding"/>
    <property type="evidence" value="ECO:0007669"/>
    <property type="project" value="UniProtKB-UniRule"/>
</dbReference>
<dbReference type="GO" id="GO:0003958">
    <property type="term" value="F:NADPH-hemoprotein reductase activity"/>
    <property type="evidence" value="ECO:0007669"/>
    <property type="project" value="InterPro"/>
</dbReference>
<dbReference type="GO" id="GO:0160246">
    <property type="term" value="F:NADPH-iron-sulfur [2Fe-2S] protein oxidoreductase activity"/>
    <property type="evidence" value="ECO:0000250"/>
    <property type="project" value="UniProtKB"/>
</dbReference>
<dbReference type="GO" id="GO:0016491">
    <property type="term" value="F:oxidoreductase activity"/>
    <property type="evidence" value="ECO:0000318"/>
    <property type="project" value="GO_Central"/>
</dbReference>
<dbReference type="GO" id="GO:0016653">
    <property type="term" value="F:oxidoreductase activity, acting on NAD(P)H, heme protein as acceptor"/>
    <property type="evidence" value="ECO:0000250"/>
    <property type="project" value="UniProtKB"/>
</dbReference>
<dbReference type="GO" id="GO:0016226">
    <property type="term" value="P:iron-sulfur cluster assembly"/>
    <property type="evidence" value="ECO:0007669"/>
    <property type="project" value="UniProtKB-UniRule"/>
</dbReference>
<dbReference type="FunFam" id="3.40.50.80:FF:000001">
    <property type="entry name" value="NADPH--cytochrome P450 reductase 1"/>
    <property type="match status" value="1"/>
</dbReference>
<dbReference type="FunFam" id="1.20.990.10:FF:000008">
    <property type="entry name" value="NADPH-dependent diflavin oxidoreductase 1"/>
    <property type="match status" value="1"/>
</dbReference>
<dbReference type="FunFam" id="3.40.50.360:FF:000015">
    <property type="entry name" value="NADPH-dependent diflavin oxidoreductase 1"/>
    <property type="match status" value="1"/>
</dbReference>
<dbReference type="Gene3D" id="3.40.50.360">
    <property type="match status" value="1"/>
</dbReference>
<dbReference type="Gene3D" id="1.20.990.10">
    <property type="entry name" value="NADPH-cytochrome p450 Reductase, Chain A, domain 3"/>
    <property type="match status" value="1"/>
</dbReference>
<dbReference type="Gene3D" id="3.40.50.80">
    <property type="entry name" value="Nucleotide-binding domain of ferredoxin-NADP reductase (FNR) module"/>
    <property type="match status" value="1"/>
</dbReference>
<dbReference type="Gene3D" id="2.40.30.10">
    <property type="entry name" value="Translation factors"/>
    <property type="match status" value="1"/>
</dbReference>
<dbReference type="HAMAP" id="MF_03178">
    <property type="entry name" value="NDOR1"/>
    <property type="match status" value="1"/>
</dbReference>
<dbReference type="InterPro" id="IPR003097">
    <property type="entry name" value="CysJ-like_FAD-binding"/>
</dbReference>
<dbReference type="InterPro" id="IPR017927">
    <property type="entry name" value="FAD-bd_FR_type"/>
</dbReference>
<dbReference type="InterPro" id="IPR001094">
    <property type="entry name" value="Flavdoxin-like"/>
</dbReference>
<dbReference type="InterPro" id="IPR008254">
    <property type="entry name" value="Flavodoxin/NO_synth"/>
</dbReference>
<dbReference type="InterPro" id="IPR001709">
    <property type="entry name" value="Flavoprot_Pyr_Nucl_cyt_Rdtase"/>
</dbReference>
<dbReference type="InterPro" id="IPR029039">
    <property type="entry name" value="Flavoprotein-like_sf"/>
</dbReference>
<dbReference type="InterPro" id="IPR039261">
    <property type="entry name" value="FNR_nucleotide-bd"/>
</dbReference>
<dbReference type="InterPro" id="IPR023173">
    <property type="entry name" value="NADPH_Cyt_P450_Rdtase_alpha"/>
</dbReference>
<dbReference type="InterPro" id="IPR028879">
    <property type="entry name" value="NDOR1"/>
</dbReference>
<dbReference type="InterPro" id="IPR001433">
    <property type="entry name" value="OxRdtase_FAD/NAD-bd"/>
</dbReference>
<dbReference type="InterPro" id="IPR017938">
    <property type="entry name" value="Riboflavin_synthase-like_b-brl"/>
</dbReference>
<dbReference type="PANTHER" id="PTHR19384:SF10">
    <property type="entry name" value="NADPH-DEPENDENT DIFLAVIN OXIDOREDUCTASE 1"/>
    <property type="match status" value="1"/>
</dbReference>
<dbReference type="PANTHER" id="PTHR19384">
    <property type="entry name" value="NITRIC OXIDE SYNTHASE-RELATED"/>
    <property type="match status" value="1"/>
</dbReference>
<dbReference type="Pfam" id="PF00667">
    <property type="entry name" value="FAD_binding_1"/>
    <property type="match status" value="1"/>
</dbReference>
<dbReference type="Pfam" id="PF00258">
    <property type="entry name" value="Flavodoxin_1"/>
    <property type="match status" value="1"/>
</dbReference>
<dbReference type="Pfam" id="PF00175">
    <property type="entry name" value="NAD_binding_1"/>
    <property type="match status" value="1"/>
</dbReference>
<dbReference type="PRINTS" id="PR00369">
    <property type="entry name" value="FLAVODOXIN"/>
</dbReference>
<dbReference type="PRINTS" id="PR00371">
    <property type="entry name" value="FPNCR"/>
</dbReference>
<dbReference type="SUPFAM" id="SSF52343">
    <property type="entry name" value="Ferredoxin reductase-like, C-terminal NADP-linked domain"/>
    <property type="match status" value="1"/>
</dbReference>
<dbReference type="SUPFAM" id="SSF52218">
    <property type="entry name" value="Flavoproteins"/>
    <property type="match status" value="1"/>
</dbReference>
<dbReference type="SUPFAM" id="SSF63380">
    <property type="entry name" value="Riboflavin synthase domain-like"/>
    <property type="match status" value="1"/>
</dbReference>
<dbReference type="PROSITE" id="PS51384">
    <property type="entry name" value="FAD_FR"/>
    <property type="match status" value="1"/>
</dbReference>
<dbReference type="PROSITE" id="PS50902">
    <property type="entry name" value="FLAVODOXIN_LIKE"/>
    <property type="match status" value="1"/>
</dbReference>
<comment type="function">
    <text evidence="1">NADPH-dependent reductase which is a central component of the cytosolic iron-sulfur (Fe-S) protein assembly (CIA) machinery. Transfers electrons from NADPH via its FAD and FMN prosthetic groups to the [2Fe-2S] cluster of ciapin1, another key component of the CIA machinery. In turn, this reduced cluster provides electrons for assembly of cytosolic iron-sulfur cluster proteins. It can also reduce the [2Fe-2S] cluster of cisd1 and activate this protein implicated in Fe/S cluster repair.</text>
</comment>
<comment type="catalytic activity">
    <reaction evidence="1">
        <text>2 oxidized [2Fe-2S]-[protein] + NADPH = 2 reduced [2Fe-2S]-[protein] + NADP(+) + H(+)</text>
        <dbReference type="Rhea" id="RHEA:67716"/>
        <dbReference type="Rhea" id="RHEA-COMP:17327"/>
        <dbReference type="Rhea" id="RHEA-COMP:17328"/>
        <dbReference type="ChEBI" id="CHEBI:15378"/>
        <dbReference type="ChEBI" id="CHEBI:33737"/>
        <dbReference type="ChEBI" id="CHEBI:33738"/>
        <dbReference type="ChEBI" id="CHEBI:57783"/>
        <dbReference type="ChEBI" id="CHEBI:58349"/>
    </reaction>
    <physiologicalReaction direction="left-to-right" evidence="1">
        <dbReference type="Rhea" id="RHEA:67717"/>
    </physiologicalReaction>
</comment>
<comment type="cofactor">
    <cofactor evidence="1">
        <name>FAD</name>
        <dbReference type="ChEBI" id="CHEBI:57692"/>
    </cofactor>
</comment>
<comment type="cofactor">
    <cofactor evidence="1">
        <name>FMN</name>
        <dbReference type="ChEBI" id="CHEBI:58210"/>
    </cofactor>
</comment>
<comment type="subunit">
    <text evidence="1">Interacts with ciapin1; as part of the cytosolic iron-sulfur (Fe-S) protein assembly (CIA) machinery.</text>
</comment>
<comment type="subcellular location">
    <subcellularLocation>
        <location evidence="1">Cytoplasm</location>
        <location evidence="1">Perinuclear region</location>
    </subcellularLocation>
    <text evidence="1">Concentrated in perinuclear structure.</text>
</comment>
<comment type="similarity">
    <text evidence="1">Belongs to the NADPH-dependent diflavin oxidoreductase NDOR1 family.</text>
</comment>
<comment type="similarity">
    <text evidence="1">In the N-terminal section; belongs to the flavodoxin family.</text>
</comment>
<comment type="similarity">
    <text evidence="1">In the C-terminal section; belongs to the flavoprotein pyridine nucleotide cytochrome reductase family.</text>
</comment>
<organism>
    <name type="scientific">Xenopus laevis</name>
    <name type="common">African clawed frog</name>
    <dbReference type="NCBI Taxonomy" id="8355"/>
    <lineage>
        <taxon>Eukaryota</taxon>
        <taxon>Metazoa</taxon>
        <taxon>Chordata</taxon>
        <taxon>Craniata</taxon>
        <taxon>Vertebrata</taxon>
        <taxon>Euteleostomi</taxon>
        <taxon>Amphibia</taxon>
        <taxon>Batrachia</taxon>
        <taxon>Anura</taxon>
        <taxon>Pipoidea</taxon>
        <taxon>Pipidae</taxon>
        <taxon>Xenopodinae</taxon>
        <taxon>Xenopus</taxon>
        <taxon>Xenopus</taxon>
    </lineage>
</organism>
<reference key="1">
    <citation type="submission" date="2004-05" db="EMBL/GenBank/DDBJ databases">
        <authorList>
            <consortium name="NIH - Xenopus Gene Collection (XGC) project"/>
        </authorList>
    </citation>
    <scope>NUCLEOTIDE SEQUENCE [LARGE SCALE MRNA]</scope>
    <source>
        <tissue>Oocyte</tissue>
    </source>
</reference>